<accession>P84203</accession>
<protein>
    <recommendedName>
        <fullName>Hemoglobin cathodic subunit alpha</fullName>
    </recommendedName>
    <alternativeName>
        <fullName>Hemoglobin cathodic alpha chain</fullName>
    </alternativeName>
</protein>
<name>HBAC_GYMUN</name>
<sequence>SLAPGDKTVVKKFWEKVGGQADEIGGEALSRMIAVYPPTRIYFSHWPDLAPGSPSVKKHGKKIIMKAVSDSVGKMDNLVGGLSALSDLHATRLHIDPSNFKILSHNILVTLAAHFPSDFTAEVHVAMDKFLSAVCAALSDKYR</sequence>
<proteinExistence type="evidence at protein level"/>
<feature type="chain" id="PRO_0000052646" description="Hemoglobin cathodic subunit alpha">
    <location>
        <begin position="1"/>
        <end position="143"/>
    </location>
</feature>
<feature type="domain" description="Globin" evidence="1">
    <location>
        <begin position="1"/>
        <end position="143"/>
    </location>
</feature>
<feature type="binding site" evidence="1">
    <location>
        <position position="59"/>
    </location>
    <ligand>
        <name>O2</name>
        <dbReference type="ChEBI" id="CHEBI:15379"/>
    </ligand>
</feature>
<feature type="binding site" description="proximal binding residue" evidence="1">
    <location>
        <position position="89"/>
    </location>
    <ligand>
        <name>heme b</name>
        <dbReference type="ChEBI" id="CHEBI:60344"/>
    </ligand>
    <ligandPart>
        <name>Fe</name>
        <dbReference type="ChEBI" id="CHEBI:18248"/>
    </ligandPart>
</feature>
<feature type="modified residue" description="N-acetylserine" evidence="2">
    <location>
        <position position="1"/>
    </location>
</feature>
<keyword id="KW-0007">Acetylation</keyword>
<keyword id="KW-0903">Direct protein sequencing</keyword>
<keyword id="KW-0349">Heme</keyword>
<keyword id="KW-0408">Iron</keyword>
<keyword id="KW-0479">Metal-binding</keyword>
<keyword id="KW-0561">Oxygen transport</keyword>
<keyword id="KW-0813">Transport</keyword>
<evidence type="ECO:0000255" key="1">
    <source>
        <dbReference type="PROSITE-ProRule" id="PRU00238"/>
    </source>
</evidence>
<evidence type="ECO:0000269" key="2">
    <source>
    </source>
</evidence>
<evidence type="ECO:0000305" key="3"/>
<organism>
    <name type="scientific">Gymnothorax unicolor</name>
    <name type="common">Brown moray</name>
    <name type="synonym">Muraenophis unicolor</name>
    <dbReference type="NCBI Taxonomy" id="296138"/>
    <lineage>
        <taxon>Eukaryota</taxon>
        <taxon>Metazoa</taxon>
        <taxon>Chordata</taxon>
        <taxon>Craniata</taxon>
        <taxon>Vertebrata</taxon>
        <taxon>Euteleostomi</taxon>
        <taxon>Actinopterygii</taxon>
        <taxon>Neopterygii</taxon>
        <taxon>Teleostei</taxon>
        <taxon>Anguilliformes</taxon>
        <taxon>Muraenidae</taxon>
        <taxon>Gymnothorax</taxon>
    </lineage>
</organism>
<comment type="function">
    <text>Involved in oxygen transport from gills to the various peripheral tissues.</text>
</comment>
<comment type="subunit">
    <text evidence="3">Heterotetramer of two alpha chains and two beta chains.</text>
</comment>
<comment type="tissue specificity">
    <text evidence="3">Red blood cells.</text>
</comment>
<comment type="miscellaneous">
    <text>This fish has two hemoglobins: cathodic and anodic. Cathodic Hb has high oxygen affinity, low cooperativity and displays a small reverse Bohr effect. Anodic Hb has low oxygen affinity and cooperativity and displays a normal Bohr effect.</text>
</comment>
<comment type="similarity">
    <text evidence="1">Belongs to the globin family.</text>
</comment>
<dbReference type="SMR" id="P84203"/>
<dbReference type="iPTMnet" id="P84203"/>
<dbReference type="GO" id="GO:0072562">
    <property type="term" value="C:blood microparticle"/>
    <property type="evidence" value="ECO:0007669"/>
    <property type="project" value="TreeGrafter"/>
</dbReference>
<dbReference type="GO" id="GO:0031838">
    <property type="term" value="C:haptoglobin-hemoglobin complex"/>
    <property type="evidence" value="ECO:0007669"/>
    <property type="project" value="TreeGrafter"/>
</dbReference>
<dbReference type="GO" id="GO:0005833">
    <property type="term" value="C:hemoglobin complex"/>
    <property type="evidence" value="ECO:0007669"/>
    <property type="project" value="InterPro"/>
</dbReference>
<dbReference type="GO" id="GO:0031720">
    <property type="term" value="F:haptoglobin binding"/>
    <property type="evidence" value="ECO:0007669"/>
    <property type="project" value="TreeGrafter"/>
</dbReference>
<dbReference type="GO" id="GO:0020037">
    <property type="term" value="F:heme binding"/>
    <property type="evidence" value="ECO:0007669"/>
    <property type="project" value="InterPro"/>
</dbReference>
<dbReference type="GO" id="GO:0046872">
    <property type="term" value="F:metal ion binding"/>
    <property type="evidence" value="ECO:0007669"/>
    <property type="project" value="UniProtKB-KW"/>
</dbReference>
<dbReference type="GO" id="GO:0043177">
    <property type="term" value="F:organic acid binding"/>
    <property type="evidence" value="ECO:0007669"/>
    <property type="project" value="TreeGrafter"/>
</dbReference>
<dbReference type="GO" id="GO:0019825">
    <property type="term" value="F:oxygen binding"/>
    <property type="evidence" value="ECO:0007669"/>
    <property type="project" value="InterPro"/>
</dbReference>
<dbReference type="GO" id="GO:0005344">
    <property type="term" value="F:oxygen carrier activity"/>
    <property type="evidence" value="ECO:0007669"/>
    <property type="project" value="UniProtKB-KW"/>
</dbReference>
<dbReference type="GO" id="GO:0004601">
    <property type="term" value="F:peroxidase activity"/>
    <property type="evidence" value="ECO:0007669"/>
    <property type="project" value="TreeGrafter"/>
</dbReference>
<dbReference type="GO" id="GO:0042744">
    <property type="term" value="P:hydrogen peroxide catabolic process"/>
    <property type="evidence" value="ECO:0007669"/>
    <property type="project" value="TreeGrafter"/>
</dbReference>
<dbReference type="CDD" id="cd08927">
    <property type="entry name" value="Hb-alpha-like"/>
    <property type="match status" value="1"/>
</dbReference>
<dbReference type="FunFam" id="1.10.490.10:FF:000002">
    <property type="entry name" value="Hemoglobin subunit alpha"/>
    <property type="match status" value="1"/>
</dbReference>
<dbReference type="Gene3D" id="1.10.490.10">
    <property type="entry name" value="Globins"/>
    <property type="match status" value="1"/>
</dbReference>
<dbReference type="InterPro" id="IPR000971">
    <property type="entry name" value="Globin"/>
</dbReference>
<dbReference type="InterPro" id="IPR009050">
    <property type="entry name" value="Globin-like_sf"/>
</dbReference>
<dbReference type="InterPro" id="IPR012292">
    <property type="entry name" value="Globin/Proto"/>
</dbReference>
<dbReference type="InterPro" id="IPR002338">
    <property type="entry name" value="Hemoglobin_a-typ"/>
</dbReference>
<dbReference type="InterPro" id="IPR050056">
    <property type="entry name" value="Hemoglobin_oxygen_transport"/>
</dbReference>
<dbReference type="PANTHER" id="PTHR11442:SF91">
    <property type="entry name" value="EMBRYONIC ALPHA GLOBIN E1-RELATED"/>
    <property type="match status" value="1"/>
</dbReference>
<dbReference type="PANTHER" id="PTHR11442">
    <property type="entry name" value="HEMOGLOBIN FAMILY MEMBER"/>
    <property type="match status" value="1"/>
</dbReference>
<dbReference type="Pfam" id="PF00042">
    <property type="entry name" value="Globin"/>
    <property type="match status" value="1"/>
</dbReference>
<dbReference type="PRINTS" id="PR00612">
    <property type="entry name" value="ALPHAHAEM"/>
</dbReference>
<dbReference type="SUPFAM" id="SSF46458">
    <property type="entry name" value="Globin-like"/>
    <property type="match status" value="1"/>
</dbReference>
<dbReference type="PROSITE" id="PS01033">
    <property type="entry name" value="GLOBIN"/>
    <property type="match status" value="1"/>
</dbReference>
<reference evidence="3" key="1">
    <citation type="journal article" date="2001" name="Eur. J. Biochem.">
        <title>The hemoglobin system of the brown moray Gymnothorax unicolor: structure/function relationships.</title>
        <authorList>
            <person name="Tamburrini M."/>
            <person name="Verde C."/>
            <person name="Olianas A."/>
            <person name="Giardina B."/>
            <person name="Corda M."/>
            <person name="Sanna M.T."/>
            <person name="Fais A."/>
            <person name="Deiana A.M."/>
            <person name="di Prisco G."/>
            <person name="Pellegrini M."/>
        </authorList>
    </citation>
    <scope>PROTEIN SEQUENCE</scope>
    <scope>ACETYLATION AT SER-1</scope>
    <source>
        <tissue evidence="2">Erythrocyte</tissue>
    </source>
</reference>